<comment type="function">
    <text evidence="1">One of the primary rRNA binding proteins, it binds directly near the 3'-end of the 23S rRNA, where it nucleates assembly of the 50S subunit.</text>
</comment>
<comment type="subunit">
    <text evidence="1">Part of the 50S ribosomal subunit. Forms a cluster with proteins L14 and L19.</text>
</comment>
<comment type="similarity">
    <text evidence="1">Belongs to the universal ribosomal protein uL3 family.</text>
</comment>
<evidence type="ECO:0000255" key="1">
    <source>
        <dbReference type="HAMAP-Rule" id="MF_01325"/>
    </source>
</evidence>
<evidence type="ECO:0000305" key="2"/>
<dbReference type="EMBL" id="AM884177">
    <property type="protein sequence ID" value="CAP07182.1"/>
    <property type="molecule type" value="Genomic_DNA"/>
</dbReference>
<dbReference type="RefSeq" id="WP_009873876.1">
    <property type="nucleotide sequence ID" value="NC_010280.2"/>
</dbReference>
<dbReference type="SMR" id="B0BCG7"/>
<dbReference type="KEGG" id="ctl:CTLon_0785"/>
<dbReference type="HOGENOM" id="CLU_044142_4_1_0"/>
<dbReference type="Proteomes" id="UP001154401">
    <property type="component" value="Chromosome"/>
</dbReference>
<dbReference type="GO" id="GO:0022625">
    <property type="term" value="C:cytosolic large ribosomal subunit"/>
    <property type="evidence" value="ECO:0007669"/>
    <property type="project" value="TreeGrafter"/>
</dbReference>
<dbReference type="GO" id="GO:0019843">
    <property type="term" value="F:rRNA binding"/>
    <property type="evidence" value="ECO:0007669"/>
    <property type="project" value="UniProtKB-UniRule"/>
</dbReference>
<dbReference type="GO" id="GO:0003735">
    <property type="term" value="F:structural constituent of ribosome"/>
    <property type="evidence" value="ECO:0007669"/>
    <property type="project" value="InterPro"/>
</dbReference>
<dbReference type="GO" id="GO:0006412">
    <property type="term" value="P:translation"/>
    <property type="evidence" value="ECO:0007669"/>
    <property type="project" value="UniProtKB-UniRule"/>
</dbReference>
<dbReference type="FunFam" id="2.40.30.10:FF:000004">
    <property type="entry name" value="50S ribosomal protein L3"/>
    <property type="match status" value="1"/>
</dbReference>
<dbReference type="Gene3D" id="3.30.160.810">
    <property type="match status" value="1"/>
</dbReference>
<dbReference type="Gene3D" id="2.40.30.10">
    <property type="entry name" value="Translation factors"/>
    <property type="match status" value="1"/>
</dbReference>
<dbReference type="HAMAP" id="MF_01325_B">
    <property type="entry name" value="Ribosomal_uL3_B"/>
    <property type="match status" value="1"/>
</dbReference>
<dbReference type="InterPro" id="IPR000597">
    <property type="entry name" value="Ribosomal_uL3"/>
</dbReference>
<dbReference type="InterPro" id="IPR019927">
    <property type="entry name" value="Ribosomal_uL3_bac/org-type"/>
</dbReference>
<dbReference type="InterPro" id="IPR009000">
    <property type="entry name" value="Transl_B-barrel_sf"/>
</dbReference>
<dbReference type="NCBIfam" id="TIGR03625">
    <property type="entry name" value="L3_bact"/>
    <property type="match status" value="1"/>
</dbReference>
<dbReference type="PANTHER" id="PTHR11229">
    <property type="entry name" value="50S RIBOSOMAL PROTEIN L3"/>
    <property type="match status" value="1"/>
</dbReference>
<dbReference type="PANTHER" id="PTHR11229:SF16">
    <property type="entry name" value="LARGE RIBOSOMAL SUBUNIT PROTEIN UL3C"/>
    <property type="match status" value="1"/>
</dbReference>
<dbReference type="Pfam" id="PF00297">
    <property type="entry name" value="Ribosomal_L3"/>
    <property type="match status" value="1"/>
</dbReference>
<dbReference type="SUPFAM" id="SSF50447">
    <property type="entry name" value="Translation proteins"/>
    <property type="match status" value="1"/>
</dbReference>
<proteinExistence type="inferred from homology"/>
<name>RL3_CHLTB</name>
<accession>B0BCG7</accession>
<reference key="1">
    <citation type="journal article" date="2008" name="Genome Res.">
        <title>Chlamydia trachomatis: genome sequence analysis of lymphogranuloma venereum isolates.</title>
        <authorList>
            <person name="Thomson N.R."/>
            <person name="Holden M.T.G."/>
            <person name="Carder C."/>
            <person name="Lennard N."/>
            <person name="Lockey S.J."/>
            <person name="Marsh P."/>
            <person name="Skipp P."/>
            <person name="O'Connor C.D."/>
            <person name="Goodhead I."/>
            <person name="Norbertzcak H."/>
            <person name="Harris B."/>
            <person name="Ormond D."/>
            <person name="Rance R."/>
            <person name="Quail M.A."/>
            <person name="Parkhill J."/>
            <person name="Stephens R.S."/>
            <person name="Clarke I.N."/>
        </authorList>
    </citation>
    <scope>NUCLEOTIDE SEQUENCE [LARGE SCALE GENOMIC DNA]</scope>
    <source>
        <strain>UCH-1/proctitis</strain>
    </source>
</reference>
<protein>
    <recommendedName>
        <fullName evidence="1">Large ribosomal subunit protein uL3</fullName>
    </recommendedName>
    <alternativeName>
        <fullName evidence="2">50S ribosomal protein L3</fullName>
    </alternativeName>
</protein>
<sequence>MRSQLSLIGKKEGMMHVFDKNGNLVACSVISVDANVVAQLKTASSDGYNAVQIGADVVQAPEKTIEKRFSKALLGHFKKSGGRACRVLKEVVVSEEAVQSVSLGDEFGLEIFDGVSNVDICGISKGKGFQGVMKKFGFRGGPKSHGSGFHRHAGSIGMRSTPGRCFPGSKRPSHMGCDRVTVKNLEVVKVDLDRKVMLVKGAIPGFKGSVVVVKRSCGVEG</sequence>
<feature type="chain" id="PRO_1000141843" description="Large ribosomal subunit protein uL3">
    <location>
        <begin position="1"/>
        <end position="221"/>
    </location>
</feature>
<organism>
    <name type="scientific">Chlamydia trachomatis serovar L2b (strain UCH-1/proctitis)</name>
    <dbReference type="NCBI Taxonomy" id="471473"/>
    <lineage>
        <taxon>Bacteria</taxon>
        <taxon>Pseudomonadati</taxon>
        <taxon>Chlamydiota</taxon>
        <taxon>Chlamydiia</taxon>
        <taxon>Chlamydiales</taxon>
        <taxon>Chlamydiaceae</taxon>
        <taxon>Chlamydia/Chlamydophila group</taxon>
        <taxon>Chlamydia</taxon>
    </lineage>
</organism>
<gene>
    <name evidence="1" type="primary">rplC</name>
    <name type="ordered locus">CTLon_0785</name>
</gene>
<keyword id="KW-0687">Ribonucleoprotein</keyword>
<keyword id="KW-0689">Ribosomal protein</keyword>
<keyword id="KW-0694">RNA-binding</keyword>
<keyword id="KW-0699">rRNA-binding</keyword>